<keyword id="KW-1185">Reference proteome</keyword>
<keyword id="KW-0687">Ribonucleoprotein</keyword>
<keyword id="KW-0689">Ribosomal protein</keyword>
<keyword id="KW-0694">RNA-binding</keyword>
<keyword id="KW-0699">rRNA-binding</keyword>
<feature type="chain" id="PRO_0000176692" description="Large ribosomal subunit protein bL9">
    <location>
        <begin position="1"/>
        <end position="152"/>
    </location>
</feature>
<accession>P0A499</accession>
<accession>P25904</accession>
<protein>
    <recommendedName>
        <fullName evidence="1">Large ribosomal subunit protein bL9</fullName>
    </recommendedName>
    <alternativeName>
        <fullName evidence="2">50S ribosomal protein L9</fullName>
    </alternativeName>
</protein>
<reference key="1">
    <citation type="journal article" date="2002" name="DNA Res.">
        <title>Complete genome structure of the thermophilic cyanobacterium Thermosynechococcus elongatus BP-1.</title>
        <authorList>
            <person name="Nakamura Y."/>
            <person name="Kaneko T."/>
            <person name="Sato S."/>
            <person name="Ikeuchi M."/>
            <person name="Katoh H."/>
            <person name="Sasamoto S."/>
            <person name="Watanabe A."/>
            <person name="Iriguchi M."/>
            <person name="Kawashima K."/>
            <person name="Kimura T."/>
            <person name="Kishida Y."/>
            <person name="Kiyokawa C."/>
            <person name="Kohara M."/>
            <person name="Matsumoto M."/>
            <person name="Matsuno A."/>
            <person name="Nakazaki N."/>
            <person name="Shimpo S."/>
            <person name="Sugimoto M."/>
            <person name="Takeuchi C."/>
            <person name="Yamada M."/>
            <person name="Tabata S."/>
        </authorList>
    </citation>
    <scope>NUCLEOTIDE SEQUENCE [LARGE SCALE GENOMIC DNA]</scope>
    <source>
        <strain>NIES-2133 / IAM M-273 / BP-1</strain>
    </source>
</reference>
<gene>
    <name evidence="1" type="primary">rplI</name>
    <name evidence="1" type="synonym">rpl9</name>
    <name type="ordered locus">tlr2413</name>
</gene>
<proteinExistence type="inferred from homology"/>
<evidence type="ECO:0000255" key="1">
    <source>
        <dbReference type="HAMAP-Rule" id="MF_00503"/>
    </source>
</evidence>
<evidence type="ECO:0000305" key="2"/>
<organism>
    <name type="scientific">Thermosynechococcus vestitus (strain NIES-2133 / IAM M-273 / BP-1)</name>
    <dbReference type="NCBI Taxonomy" id="197221"/>
    <lineage>
        <taxon>Bacteria</taxon>
        <taxon>Bacillati</taxon>
        <taxon>Cyanobacteriota</taxon>
        <taxon>Cyanophyceae</taxon>
        <taxon>Acaryochloridales</taxon>
        <taxon>Thermosynechococcaceae</taxon>
        <taxon>Thermosynechococcus</taxon>
    </lineage>
</organism>
<name>RL9_THEVB</name>
<comment type="function">
    <text evidence="1">Binds to the 23S rRNA.</text>
</comment>
<comment type="similarity">
    <text evidence="1">Belongs to the bacterial ribosomal protein bL9 family.</text>
</comment>
<sequence>MAKRVQVVLNETVNKLGRMGQVVEVAPGYARNYLFPRGIAEPATPSALRRVERLQEKERQRLAALKSIAEKQKATLEKLATITISMPVGEKDMLFGSVTPQDVADAIQAITGETIDRREMILPEIRKLGTYTAEIKLHPEVTVKLNIQVVAD</sequence>
<dbReference type="EMBL" id="BA000039">
    <property type="protein sequence ID" value="BAC09965.1"/>
    <property type="molecule type" value="Genomic_DNA"/>
</dbReference>
<dbReference type="RefSeq" id="NP_683203.1">
    <property type="nucleotide sequence ID" value="NC_004113.1"/>
</dbReference>
<dbReference type="RefSeq" id="WP_011058245.1">
    <property type="nucleotide sequence ID" value="NC_004113.1"/>
</dbReference>
<dbReference type="SMR" id="P0A499"/>
<dbReference type="STRING" id="197221.gene:10749033"/>
<dbReference type="EnsemblBacteria" id="BAC09965">
    <property type="protein sequence ID" value="BAC09965"/>
    <property type="gene ID" value="BAC09965"/>
</dbReference>
<dbReference type="KEGG" id="tel:tlr2413"/>
<dbReference type="PATRIC" id="fig|197221.4.peg.2536"/>
<dbReference type="eggNOG" id="COG0359">
    <property type="taxonomic scope" value="Bacteria"/>
</dbReference>
<dbReference type="Proteomes" id="UP000000440">
    <property type="component" value="Chromosome"/>
</dbReference>
<dbReference type="GO" id="GO:1990904">
    <property type="term" value="C:ribonucleoprotein complex"/>
    <property type="evidence" value="ECO:0007669"/>
    <property type="project" value="UniProtKB-KW"/>
</dbReference>
<dbReference type="GO" id="GO:0005840">
    <property type="term" value="C:ribosome"/>
    <property type="evidence" value="ECO:0007669"/>
    <property type="project" value="UniProtKB-KW"/>
</dbReference>
<dbReference type="GO" id="GO:0019843">
    <property type="term" value="F:rRNA binding"/>
    <property type="evidence" value="ECO:0007669"/>
    <property type="project" value="UniProtKB-UniRule"/>
</dbReference>
<dbReference type="GO" id="GO:0003735">
    <property type="term" value="F:structural constituent of ribosome"/>
    <property type="evidence" value="ECO:0007669"/>
    <property type="project" value="InterPro"/>
</dbReference>
<dbReference type="GO" id="GO:0006412">
    <property type="term" value="P:translation"/>
    <property type="evidence" value="ECO:0007669"/>
    <property type="project" value="UniProtKB-UniRule"/>
</dbReference>
<dbReference type="Gene3D" id="3.10.430.100">
    <property type="entry name" value="Ribosomal protein L9, C-terminal domain"/>
    <property type="match status" value="1"/>
</dbReference>
<dbReference type="Gene3D" id="3.40.5.10">
    <property type="entry name" value="Ribosomal protein L9, N-terminal domain"/>
    <property type="match status" value="1"/>
</dbReference>
<dbReference type="HAMAP" id="MF_00503">
    <property type="entry name" value="Ribosomal_bL9"/>
    <property type="match status" value="1"/>
</dbReference>
<dbReference type="InterPro" id="IPR000244">
    <property type="entry name" value="Ribosomal_bL9"/>
</dbReference>
<dbReference type="InterPro" id="IPR009027">
    <property type="entry name" value="Ribosomal_bL9/RNase_H1_N"/>
</dbReference>
<dbReference type="InterPro" id="IPR020594">
    <property type="entry name" value="Ribosomal_bL9_bac/chp"/>
</dbReference>
<dbReference type="InterPro" id="IPR020069">
    <property type="entry name" value="Ribosomal_bL9_C"/>
</dbReference>
<dbReference type="InterPro" id="IPR036791">
    <property type="entry name" value="Ribosomal_bL9_C_sf"/>
</dbReference>
<dbReference type="InterPro" id="IPR020070">
    <property type="entry name" value="Ribosomal_bL9_N"/>
</dbReference>
<dbReference type="InterPro" id="IPR036935">
    <property type="entry name" value="Ribosomal_bL9_N_sf"/>
</dbReference>
<dbReference type="NCBIfam" id="TIGR00158">
    <property type="entry name" value="L9"/>
    <property type="match status" value="1"/>
</dbReference>
<dbReference type="PANTHER" id="PTHR21368">
    <property type="entry name" value="50S RIBOSOMAL PROTEIN L9"/>
    <property type="match status" value="1"/>
</dbReference>
<dbReference type="Pfam" id="PF03948">
    <property type="entry name" value="Ribosomal_L9_C"/>
    <property type="match status" value="1"/>
</dbReference>
<dbReference type="Pfam" id="PF01281">
    <property type="entry name" value="Ribosomal_L9_N"/>
    <property type="match status" value="1"/>
</dbReference>
<dbReference type="SUPFAM" id="SSF55658">
    <property type="entry name" value="L9 N-domain-like"/>
    <property type="match status" value="1"/>
</dbReference>
<dbReference type="SUPFAM" id="SSF55653">
    <property type="entry name" value="Ribosomal protein L9 C-domain"/>
    <property type="match status" value="1"/>
</dbReference>
<dbReference type="PROSITE" id="PS00651">
    <property type="entry name" value="RIBOSOMAL_L9"/>
    <property type="match status" value="1"/>
</dbReference>